<reference key="1">
    <citation type="journal article" date="1999" name="Nature">
        <title>Sequence and analysis of chromosome 4 of the plant Arabidopsis thaliana.</title>
        <authorList>
            <person name="Mayer K.F.X."/>
            <person name="Schueller C."/>
            <person name="Wambutt R."/>
            <person name="Murphy G."/>
            <person name="Volckaert G."/>
            <person name="Pohl T."/>
            <person name="Duesterhoeft A."/>
            <person name="Stiekema W."/>
            <person name="Entian K.-D."/>
            <person name="Terryn N."/>
            <person name="Harris B."/>
            <person name="Ansorge W."/>
            <person name="Brandt P."/>
            <person name="Grivell L.A."/>
            <person name="Rieger M."/>
            <person name="Weichselgartner M."/>
            <person name="de Simone V."/>
            <person name="Obermaier B."/>
            <person name="Mache R."/>
            <person name="Mueller M."/>
            <person name="Kreis M."/>
            <person name="Delseny M."/>
            <person name="Puigdomenech P."/>
            <person name="Watson M."/>
            <person name="Schmidtheini T."/>
            <person name="Reichert B."/>
            <person name="Portetelle D."/>
            <person name="Perez-Alonso M."/>
            <person name="Boutry M."/>
            <person name="Bancroft I."/>
            <person name="Vos P."/>
            <person name="Hoheisel J."/>
            <person name="Zimmermann W."/>
            <person name="Wedler H."/>
            <person name="Ridley P."/>
            <person name="Langham S.-A."/>
            <person name="McCullagh B."/>
            <person name="Bilham L."/>
            <person name="Robben J."/>
            <person name="van der Schueren J."/>
            <person name="Grymonprez B."/>
            <person name="Chuang Y.-J."/>
            <person name="Vandenbussche F."/>
            <person name="Braeken M."/>
            <person name="Weltjens I."/>
            <person name="Voet M."/>
            <person name="Bastiaens I."/>
            <person name="Aert R."/>
            <person name="Defoor E."/>
            <person name="Weitzenegger T."/>
            <person name="Bothe G."/>
            <person name="Ramsperger U."/>
            <person name="Hilbert H."/>
            <person name="Braun M."/>
            <person name="Holzer E."/>
            <person name="Brandt A."/>
            <person name="Peters S."/>
            <person name="van Staveren M."/>
            <person name="Dirkse W."/>
            <person name="Mooijman P."/>
            <person name="Klein Lankhorst R."/>
            <person name="Rose M."/>
            <person name="Hauf J."/>
            <person name="Koetter P."/>
            <person name="Berneiser S."/>
            <person name="Hempel S."/>
            <person name="Feldpausch M."/>
            <person name="Lamberth S."/>
            <person name="Van den Daele H."/>
            <person name="De Keyser A."/>
            <person name="Buysshaert C."/>
            <person name="Gielen J."/>
            <person name="Villarroel R."/>
            <person name="De Clercq R."/>
            <person name="van Montagu M."/>
            <person name="Rogers J."/>
            <person name="Cronin A."/>
            <person name="Quail M.A."/>
            <person name="Bray-Allen S."/>
            <person name="Clark L."/>
            <person name="Doggett J."/>
            <person name="Hall S."/>
            <person name="Kay M."/>
            <person name="Lennard N."/>
            <person name="McLay K."/>
            <person name="Mayes R."/>
            <person name="Pettett A."/>
            <person name="Rajandream M.A."/>
            <person name="Lyne M."/>
            <person name="Benes V."/>
            <person name="Rechmann S."/>
            <person name="Borkova D."/>
            <person name="Bloecker H."/>
            <person name="Scharfe M."/>
            <person name="Grimm M."/>
            <person name="Loehnert T.-H."/>
            <person name="Dose S."/>
            <person name="de Haan M."/>
            <person name="Maarse A.C."/>
            <person name="Schaefer M."/>
            <person name="Mueller-Auer S."/>
            <person name="Gabel C."/>
            <person name="Fuchs M."/>
            <person name="Fartmann B."/>
            <person name="Granderath K."/>
            <person name="Dauner D."/>
            <person name="Herzl A."/>
            <person name="Neumann S."/>
            <person name="Argiriou A."/>
            <person name="Vitale D."/>
            <person name="Liguori R."/>
            <person name="Piravandi E."/>
            <person name="Massenet O."/>
            <person name="Quigley F."/>
            <person name="Clabauld G."/>
            <person name="Muendlein A."/>
            <person name="Felber R."/>
            <person name="Schnabl S."/>
            <person name="Hiller R."/>
            <person name="Schmidt W."/>
            <person name="Lecharny A."/>
            <person name="Aubourg S."/>
            <person name="Chefdor F."/>
            <person name="Cooke R."/>
            <person name="Berger C."/>
            <person name="Monfort A."/>
            <person name="Casacuberta E."/>
            <person name="Gibbons T."/>
            <person name="Weber N."/>
            <person name="Vandenbol M."/>
            <person name="Bargues M."/>
            <person name="Terol J."/>
            <person name="Torres A."/>
            <person name="Perez-Perez A."/>
            <person name="Purnelle B."/>
            <person name="Bent E."/>
            <person name="Johnson S."/>
            <person name="Tacon D."/>
            <person name="Jesse T."/>
            <person name="Heijnen L."/>
            <person name="Schwarz S."/>
            <person name="Scholler P."/>
            <person name="Heber S."/>
            <person name="Francs P."/>
            <person name="Bielke C."/>
            <person name="Frishman D."/>
            <person name="Haase D."/>
            <person name="Lemcke K."/>
            <person name="Mewes H.-W."/>
            <person name="Stocker S."/>
            <person name="Zaccaria P."/>
            <person name="Bevan M."/>
            <person name="Wilson R.K."/>
            <person name="de la Bastide M."/>
            <person name="Habermann K."/>
            <person name="Parnell L."/>
            <person name="Dedhia N."/>
            <person name="Gnoj L."/>
            <person name="Schutz K."/>
            <person name="Huang E."/>
            <person name="Spiegel L."/>
            <person name="Sekhon M."/>
            <person name="Murray J."/>
            <person name="Sheet P."/>
            <person name="Cordes M."/>
            <person name="Abu-Threideh J."/>
            <person name="Stoneking T."/>
            <person name="Kalicki J."/>
            <person name="Graves T."/>
            <person name="Harmon G."/>
            <person name="Edwards J."/>
            <person name="Latreille P."/>
            <person name="Courtney L."/>
            <person name="Cloud J."/>
            <person name="Abbott A."/>
            <person name="Scott K."/>
            <person name="Johnson D."/>
            <person name="Minx P."/>
            <person name="Bentley D."/>
            <person name="Fulton B."/>
            <person name="Miller N."/>
            <person name="Greco T."/>
            <person name="Kemp K."/>
            <person name="Kramer J."/>
            <person name="Fulton L."/>
            <person name="Mardis E."/>
            <person name="Dante M."/>
            <person name="Pepin K."/>
            <person name="Hillier L.W."/>
            <person name="Nelson J."/>
            <person name="Spieth J."/>
            <person name="Ryan E."/>
            <person name="Andrews S."/>
            <person name="Geisel C."/>
            <person name="Layman D."/>
            <person name="Du H."/>
            <person name="Ali J."/>
            <person name="Berghoff A."/>
            <person name="Jones K."/>
            <person name="Drone K."/>
            <person name="Cotton M."/>
            <person name="Joshu C."/>
            <person name="Antonoiu B."/>
            <person name="Zidanic M."/>
            <person name="Strong C."/>
            <person name="Sun H."/>
            <person name="Lamar B."/>
            <person name="Yordan C."/>
            <person name="Ma P."/>
            <person name="Zhong J."/>
            <person name="Preston R."/>
            <person name="Vil D."/>
            <person name="Shekher M."/>
            <person name="Matero A."/>
            <person name="Shah R."/>
            <person name="Swaby I.K."/>
            <person name="O'Shaughnessy A."/>
            <person name="Rodriguez M."/>
            <person name="Hoffman J."/>
            <person name="Till S."/>
            <person name="Granat S."/>
            <person name="Shohdy N."/>
            <person name="Hasegawa A."/>
            <person name="Hameed A."/>
            <person name="Lodhi M."/>
            <person name="Johnson A."/>
            <person name="Chen E."/>
            <person name="Marra M.A."/>
            <person name="Martienssen R."/>
            <person name="McCombie W.R."/>
        </authorList>
    </citation>
    <scope>NUCLEOTIDE SEQUENCE [LARGE SCALE GENOMIC DNA]</scope>
    <source>
        <strain>cv. Columbia</strain>
    </source>
</reference>
<reference key="2">
    <citation type="journal article" date="2017" name="Plant J.">
        <title>Araport11: a complete reannotation of the Arabidopsis thaliana reference genome.</title>
        <authorList>
            <person name="Cheng C.Y."/>
            <person name="Krishnakumar V."/>
            <person name="Chan A.P."/>
            <person name="Thibaud-Nissen F."/>
            <person name="Schobel S."/>
            <person name="Town C.D."/>
        </authorList>
    </citation>
    <scope>GENOME REANNOTATION</scope>
    <source>
        <strain>cv. Columbia</strain>
    </source>
</reference>
<reference key="3">
    <citation type="journal article" date="2007" name="Plant Physiol.">
        <title>Repression of the LEAFY COTYLEDON 1/B3 regulatory network in plant embryo development by VP1/ABSCISIC ACID INSENSITIVE 3-LIKE B3 genes.</title>
        <authorList>
            <person name="Suzuki M."/>
            <person name="Wang H.H.-Y."/>
            <person name="McCarty D.R."/>
        </authorList>
    </citation>
    <scope>FUNCTION</scope>
    <scope>DISRUPTION PHENOTYPE</scope>
</reference>
<reference key="4">
    <citation type="journal article" date="2008" name="Trends Plant Sci.">
        <title>The plant B3 superfamily.</title>
        <authorList>
            <person name="Swaminathan K."/>
            <person name="Peterson K."/>
            <person name="Jack T."/>
        </authorList>
    </citation>
    <scope>GENE FAMILY</scope>
</reference>
<dbReference type="EMBL" id="AL022603">
    <property type="protein sequence ID" value="CAA18719.1"/>
    <property type="status" value="ALT_SEQ"/>
    <property type="molecule type" value="Genomic_DNA"/>
</dbReference>
<dbReference type="EMBL" id="AL035527">
    <property type="protein sequence ID" value="CAB36799.1"/>
    <property type="status" value="ALT_SEQ"/>
    <property type="molecule type" value="Genomic_DNA"/>
</dbReference>
<dbReference type="EMBL" id="AL161555">
    <property type="protein sequence ID" value="CAB81262.1"/>
    <property type="status" value="ALT_SEQ"/>
    <property type="molecule type" value="Genomic_DNA"/>
</dbReference>
<dbReference type="EMBL" id="CP002687">
    <property type="status" value="NOT_ANNOTATED_CDS"/>
    <property type="molecule type" value="Genomic_DNA"/>
</dbReference>
<dbReference type="PIR" id="H85245">
    <property type="entry name" value="H85245"/>
</dbReference>
<dbReference type="PIR" id="T05163">
    <property type="entry name" value="T05163"/>
</dbReference>
<dbReference type="SMR" id="O65420"/>
<dbReference type="FunCoup" id="O65420">
    <property type="interactions" value="3"/>
</dbReference>
<dbReference type="STRING" id="3702.O65420"/>
<dbReference type="PaxDb" id="3702-AT4G21550.1"/>
<dbReference type="ProteomicsDB" id="228549"/>
<dbReference type="Araport" id="AT4G21550"/>
<dbReference type="TAIR" id="AT4G21550">
    <property type="gene designation" value="VAL3"/>
</dbReference>
<dbReference type="eggNOG" id="ENOG502QPW7">
    <property type="taxonomic scope" value="Eukaryota"/>
</dbReference>
<dbReference type="HOGENOM" id="CLU_015907_0_0_1"/>
<dbReference type="InParanoid" id="O65420"/>
<dbReference type="PRO" id="PR:O65420"/>
<dbReference type="Proteomes" id="UP000006548">
    <property type="component" value="Chromosome 4"/>
</dbReference>
<dbReference type="ExpressionAtlas" id="O65420">
    <property type="expression patterns" value="baseline and differential"/>
</dbReference>
<dbReference type="GO" id="GO:0005634">
    <property type="term" value="C:nucleus"/>
    <property type="evidence" value="ECO:0007669"/>
    <property type="project" value="UniProtKB-SubCell"/>
</dbReference>
<dbReference type="GO" id="GO:0003677">
    <property type="term" value="F:DNA binding"/>
    <property type="evidence" value="ECO:0007669"/>
    <property type="project" value="UniProtKB-KW"/>
</dbReference>
<dbReference type="GO" id="GO:0003700">
    <property type="term" value="F:DNA-binding transcription factor activity"/>
    <property type="evidence" value="ECO:0000250"/>
    <property type="project" value="TAIR"/>
</dbReference>
<dbReference type="GO" id="GO:0048366">
    <property type="term" value="P:leaf development"/>
    <property type="evidence" value="ECO:0000315"/>
    <property type="project" value="UniProtKB"/>
</dbReference>
<dbReference type="CDD" id="cd10017">
    <property type="entry name" value="B3_DNA"/>
    <property type="match status" value="1"/>
</dbReference>
<dbReference type="Gene3D" id="2.40.330.10">
    <property type="entry name" value="DNA-binding pseudobarrel domain"/>
    <property type="match status" value="1"/>
</dbReference>
<dbReference type="InterPro" id="IPR003340">
    <property type="entry name" value="B3_DNA-bd"/>
</dbReference>
<dbReference type="InterPro" id="IPR015300">
    <property type="entry name" value="DNA-bd_pseudobarrel_sf"/>
</dbReference>
<dbReference type="PANTHER" id="PTHR46245">
    <property type="entry name" value="B3 DOMAIN-CONTAINING PROTEIN OS07G0563300"/>
    <property type="match status" value="1"/>
</dbReference>
<dbReference type="PANTHER" id="PTHR46245:SF10">
    <property type="entry name" value="B3 DOMAIN-CONTAINING TRANSCRIPTION FACTOR VAL3"/>
    <property type="match status" value="1"/>
</dbReference>
<dbReference type="Pfam" id="PF02362">
    <property type="entry name" value="B3"/>
    <property type="match status" value="1"/>
</dbReference>
<dbReference type="SMART" id="SM01019">
    <property type="entry name" value="B3"/>
    <property type="match status" value="1"/>
</dbReference>
<dbReference type="SUPFAM" id="SSF101936">
    <property type="entry name" value="DNA-binding pseudobarrel domain"/>
    <property type="match status" value="1"/>
</dbReference>
<dbReference type="PROSITE" id="PS50863">
    <property type="entry name" value="B3"/>
    <property type="match status" value="1"/>
</dbReference>
<evidence type="ECO:0000255" key="1">
    <source>
        <dbReference type="PROSITE-ProRule" id="PRU00326"/>
    </source>
</evidence>
<evidence type="ECO:0000256" key="2">
    <source>
        <dbReference type="SAM" id="MobiDB-lite"/>
    </source>
</evidence>
<evidence type="ECO:0000269" key="3">
    <source>
    </source>
</evidence>
<evidence type="ECO:0000305" key="4"/>
<protein>
    <recommendedName>
        <fullName>B3 domain-containing transcription factor VAL3</fullName>
    </recommendedName>
    <alternativeName>
        <fullName>Protein HIGH-LEVEL EXPRESSION OF SUGAR-INDUCIBLE-LIKE 2</fullName>
    </alternativeName>
    <alternativeName>
        <fullName>Protein VP1/ABI3-LIKE 3</fullName>
    </alternativeName>
</protein>
<sequence length="713" mass="79758">MLSSSSMSSSSLSARFCFNHECFEFKLDHCRPGWRLRSGDFVDLCDRCASAYEQGKFCDVFHQRASGWRCCESCGKRIHCGCIASASAYTLMDAGGIECLACARKKFALGPNFSPSPSFLFQSPISEKFKDLSINWSSSTRSNQISYQPPSCLDPSVLQFDFRNRGGNNEFSQPASKERVTACTMEKKRGMNDMIGKLMSENSKHYRVSPFPNVNVYHPLISLKEGPCGTQLAFPVPITTPIEKTGHSRLDGSNLWHTRNSSPLSRLHNDLNGGADSPFESKSRNVMAHLETPGKYQVVPRFWPKVSYKNQVLQNQSKESESVVTPLFEKILSATDTGKRLVLPKKYAEAFLPQLSHTKGVPLTVQDPMGKEWRFQFRFWPSSKGRIYVLEGVTPFIQTLQLQAGDTVIFSRLDPERKLILGFRKASITQSSDQADPADMHSPFEVKKSAYITKETPGVECSSGKKKSSMMITRSKRQKVEKGDDNLLKLTWEEAQGFLLPPPNLTPSRVVIEDYEFEEYEEAPIIGKPTDVAGSTCTEVEGLLISPTTTKHPRHRDGCTCIICIQSPSGIGPKHDRCCSCAVCDTNKRRRRSLLLRREKKQMEKEDNARKLLEQLNSDNGLHQSANNSENHERHASPLKVQLDLNFKPEKDEESLPGSNKTTKSETLPHDDTVKSSFTSPSSSSAHSQNNKEDEGKLKTTTEIADTTTTSSM</sequence>
<accession>O65420</accession>
<accession>F4JJK2</accession>
<accession>Q9SVT6</accession>
<organism>
    <name type="scientific">Arabidopsis thaliana</name>
    <name type="common">Mouse-ear cress</name>
    <dbReference type="NCBI Taxonomy" id="3702"/>
    <lineage>
        <taxon>Eukaryota</taxon>
        <taxon>Viridiplantae</taxon>
        <taxon>Streptophyta</taxon>
        <taxon>Embryophyta</taxon>
        <taxon>Tracheophyta</taxon>
        <taxon>Spermatophyta</taxon>
        <taxon>Magnoliopsida</taxon>
        <taxon>eudicotyledons</taxon>
        <taxon>Gunneridae</taxon>
        <taxon>Pentapetalae</taxon>
        <taxon>rosids</taxon>
        <taxon>malvids</taxon>
        <taxon>Brassicales</taxon>
        <taxon>Brassicaceae</taxon>
        <taxon>Camelineae</taxon>
        <taxon>Arabidopsis</taxon>
    </lineage>
</organism>
<comment type="function">
    <text evidence="3">May be involved in plant development.</text>
</comment>
<comment type="subcellular location">
    <subcellularLocation>
        <location evidence="4">Nucleus</location>
    </subcellularLocation>
</comment>
<comment type="disruption phenotype">
    <text evidence="3">Variegated leaves.</text>
</comment>
<comment type="sequence caution" evidence="4">
    <conflict type="erroneous gene model prediction">
        <sequence resource="EMBL-CDS" id="CAA18719"/>
    </conflict>
</comment>
<comment type="sequence caution" evidence="4">
    <conflict type="erroneous gene model prediction">
        <sequence resource="EMBL-CDS" id="CAB36799"/>
    </conflict>
</comment>
<comment type="sequence caution" evidence="4">
    <conflict type="erroneous gene model prediction">
        <sequence resource="EMBL-CDS" id="CAB81262"/>
    </conflict>
</comment>
<feature type="chain" id="PRO_0000375119" description="B3 domain-containing transcription factor VAL3">
    <location>
        <begin position="1"/>
        <end position="713"/>
    </location>
</feature>
<feature type="DNA-binding region" description="TF-B3" evidence="1">
    <location>
        <begin position="328"/>
        <end position="427"/>
    </location>
</feature>
<feature type="region of interest" description="Disordered" evidence="2">
    <location>
        <begin position="459"/>
        <end position="478"/>
    </location>
</feature>
<feature type="region of interest" description="Disordered" evidence="2">
    <location>
        <begin position="616"/>
        <end position="713"/>
    </location>
</feature>
<feature type="compositionally biased region" description="Basic residues" evidence="2">
    <location>
        <begin position="464"/>
        <end position="477"/>
    </location>
</feature>
<feature type="compositionally biased region" description="Polar residues" evidence="2">
    <location>
        <begin position="616"/>
        <end position="629"/>
    </location>
</feature>
<feature type="compositionally biased region" description="Basic and acidic residues" evidence="2">
    <location>
        <begin position="663"/>
        <end position="674"/>
    </location>
</feature>
<feature type="compositionally biased region" description="Low complexity" evidence="2">
    <location>
        <begin position="676"/>
        <end position="688"/>
    </location>
</feature>
<feature type="compositionally biased region" description="Basic and acidic residues" evidence="2">
    <location>
        <begin position="690"/>
        <end position="700"/>
    </location>
</feature>
<feature type="compositionally biased region" description="Low complexity" evidence="2">
    <location>
        <begin position="701"/>
        <end position="713"/>
    </location>
</feature>
<gene>
    <name type="primary">VAL3</name>
    <name type="synonym">HSL2</name>
    <name type="ordered locus">At4g21550</name>
    <name type="ORF">F18E5.170</name>
</gene>
<name>VAL3_ARATH</name>
<proteinExistence type="predicted"/>
<keyword id="KW-0238">DNA-binding</keyword>
<keyword id="KW-0539">Nucleus</keyword>
<keyword id="KW-1185">Reference proteome</keyword>
<keyword id="KW-0804">Transcription</keyword>
<keyword id="KW-0805">Transcription regulation</keyword>